<gene>
    <name evidence="6" type="primary">crh2</name>
    <name type="ORF">BCIN_15g03070</name>
</gene>
<proteinExistence type="evidence at protein level"/>
<keyword id="KW-0961">Cell wall biogenesis/degradation</keyword>
<keyword id="KW-1015">Disulfide bond</keyword>
<keyword id="KW-0325">Glycoprotein</keyword>
<keyword id="KW-0326">Glycosidase</keyword>
<keyword id="KW-0328">Glycosyltransferase</keyword>
<keyword id="KW-0378">Hydrolase</keyword>
<keyword id="KW-0472">Membrane</keyword>
<keyword id="KW-1185">Reference proteome</keyword>
<keyword id="KW-0732">Signal</keyword>
<keyword id="KW-0808">Transferase</keyword>
<keyword id="KW-0812">Transmembrane</keyword>
<keyword id="KW-1133">Transmembrane helix</keyword>
<accession>A0A384K4T0</accession>
<sequence length="451" mass="48938">MQFNSLVLLAGATILSPFVQAQTWTTCNPLNETCPNDPALGTNHTFVFNTSSTVTDYYNITAGSLTYGDDGAEFTIAKQGQSPTIQSKFYIFFGQVSVIMKAATGVGIVSSIVLESDDLDEIDWEFIGGNDTHAETNYFGKGNTTSYDRAIWYPTPSDPTANFHNYTVDWTAERVQWWIDDSLVRTLAYADAVDGKNFPQTPMTVRLGIWSGGDPKGNSQGTIEWAGGETDFTKVPFTMYVKSAAVQDYSTGSEYEWTDKTGDWTSIKVISGNSTVAETITKNETPTLSLGEKWDNLPKTTKLAVYCGGGAAVAALVSAFLFTFLRQRRNGRLEREAYNQLIEKQQQDAYKDQMELHNKGIGGFDNNSYATQGDDALGGWGSNQGTGYVGPSGSASAMASGSPMVQAGQHGPMSPTMVMRNGEMSPHSAEFPQPQQPMFGGSANGGSYMKM</sequence>
<name>CRH2_BOTFB</name>
<feature type="signal peptide" evidence="2">
    <location>
        <begin position="1"/>
        <end position="21"/>
    </location>
</feature>
<feature type="chain" id="PRO_5016930159" description="Crh-like protein 2" evidence="2">
    <location>
        <begin position="22"/>
        <end position="451"/>
    </location>
</feature>
<feature type="transmembrane region" description="Helical" evidence="2">
    <location>
        <begin position="305"/>
        <end position="325"/>
    </location>
</feature>
<feature type="domain" description="GH16" evidence="4">
    <location>
        <begin position="22"/>
        <end position="241"/>
    </location>
</feature>
<feature type="active site" description="Nucleophile" evidence="8">
    <location>
        <position position="121"/>
    </location>
</feature>
<feature type="active site" description="Proton donor" evidence="8">
    <location>
        <position position="125"/>
    </location>
</feature>
<feature type="binding site" evidence="1">
    <location>
        <position position="125"/>
    </location>
    <ligand>
        <name>chitin</name>
        <dbReference type="ChEBI" id="CHEBI:17029"/>
    </ligand>
</feature>
<feature type="binding site" evidence="1">
    <location>
        <position position="206"/>
    </location>
    <ligand>
        <name>chitin</name>
        <dbReference type="ChEBI" id="CHEBI:17029"/>
    </ligand>
</feature>
<feature type="binding site" evidence="1">
    <location>
        <position position="210"/>
    </location>
    <ligand>
        <name>chitin</name>
        <dbReference type="ChEBI" id="CHEBI:17029"/>
    </ligand>
</feature>
<feature type="binding site" evidence="1">
    <location>
        <position position="222"/>
    </location>
    <ligand>
        <name>chitin</name>
        <dbReference type="ChEBI" id="CHEBI:17029"/>
    </ligand>
</feature>
<feature type="glycosylation site" description="N-linked (GlcNAc...) asparagine" evidence="3">
    <location>
        <position position="31"/>
    </location>
</feature>
<feature type="glycosylation site" description="N-linked (GlcNAc...) asparagine" evidence="3">
    <location>
        <position position="43"/>
    </location>
</feature>
<feature type="glycosylation site" description="N-linked (GlcNAc...) asparagine" evidence="3">
    <location>
        <position position="49"/>
    </location>
</feature>
<feature type="glycosylation site" description="N-linked (GlcNAc...) asparagine" evidence="3">
    <location>
        <position position="59"/>
    </location>
</feature>
<feature type="glycosylation site" description="N-linked (GlcNAc...) asparagine" evidence="3">
    <location>
        <position position="130"/>
    </location>
</feature>
<feature type="glycosylation site" description="N-linked (GlcNAc...) asparagine" evidence="3">
    <location>
        <position position="143"/>
    </location>
</feature>
<feature type="glycosylation site" description="N-linked (GlcNAc...) asparagine" evidence="3">
    <location>
        <position position="165"/>
    </location>
</feature>
<feature type="glycosylation site" description="N-linked (GlcNAc...) asparagine" evidence="3">
    <location>
        <position position="273"/>
    </location>
</feature>
<feature type="glycosylation site" description="N-linked (GlcNAc...) asparagine" evidence="3">
    <location>
        <position position="366"/>
    </location>
</feature>
<feature type="disulfide bond" evidence="1">
    <location>
        <begin position="27"/>
        <end position="34"/>
    </location>
</feature>
<evidence type="ECO:0000250" key="1">
    <source>
        <dbReference type="UniProtKB" id="Q8J0P4"/>
    </source>
</evidence>
<evidence type="ECO:0000255" key="2"/>
<evidence type="ECO:0000255" key="3">
    <source>
        <dbReference type="PROSITE-ProRule" id="PRU00498"/>
    </source>
</evidence>
<evidence type="ECO:0000255" key="4">
    <source>
        <dbReference type="PROSITE-ProRule" id="PRU01098"/>
    </source>
</evidence>
<evidence type="ECO:0000269" key="5">
    <source>
    </source>
</evidence>
<evidence type="ECO:0000303" key="6">
    <source>
    </source>
</evidence>
<evidence type="ECO:0000305" key="7"/>
<evidence type="ECO:0000305" key="8">
    <source>
    </source>
</evidence>
<organism>
    <name type="scientific">Botryotinia fuckeliana (strain B05.10)</name>
    <name type="common">Noble rot fungus</name>
    <name type="synonym">Botrytis cinerea</name>
    <dbReference type="NCBI Taxonomy" id="332648"/>
    <lineage>
        <taxon>Eukaryota</taxon>
        <taxon>Fungi</taxon>
        <taxon>Dikarya</taxon>
        <taxon>Ascomycota</taxon>
        <taxon>Pezizomycotina</taxon>
        <taxon>Leotiomycetes</taxon>
        <taxon>Helotiales</taxon>
        <taxon>Sclerotiniaceae</taxon>
        <taxon>Botrytis</taxon>
    </lineage>
</organism>
<protein>
    <recommendedName>
        <fullName evidence="6">Crh-like protein 2</fullName>
    </recommendedName>
    <domain>
        <recommendedName>
            <fullName evidence="1">Chitinase crh2</fullName>
            <ecNumber evidence="1">3.2.1.14</ecNumber>
        </recommendedName>
    </domain>
    <domain>
        <recommendedName>
            <fullName evidence="1">Chitin transglycosylase crh2</fullName>
            <ecNumber evidence="1">2.4.-.-</ecNumber>
        </recommendedName>
    </domain>
</protein>
<comment type="function">
    <text evidence="1 5">Dual chitinase/transglycosylase that plays a role in cell wall architecture (PubMed:33846308). Chitinase and transglycosylase activities are coupled (By similarity). Required for the polysaccharide cross-linking at the septa and the cell wall (By similarity). More specifically, transfers chitin to 1,6-beta-glucan in the cell wall (By similarity).</text>
</comment>
<comment type="catalytic activity">
    <reaction evidence="1">
        <text>Random endo-hydrolysis of N-acetyl-beta-D-glucosaminide (1-&gt;4)-beta-linkages in chitin and chitodextrins.</text>
        <dbReference type="EC" id="3.2.1.14"/>
    </reaction>
</comment>
<comment type="subunit">
    <text evidence="5">Forms homodimers as well as heterodimers with other crh protein members crh1 and crh3 (PubMed:33846308). Dimerization may be necessary for the transglycosylation activity (PubMed:33846308).</text>
</comment>
<comment type="subcellular location">
    <subcellularLocation>
        <location evidence="2">Membrane</location>
        <topology evidence="2">Single-pass membrane protein</topology>
    </subcellularLocation>
</comment>
<comment type="similarity">
    <text evidence="7">Belongs to the glycosyl hydrolase 16 family. CRH1 subfamily.</text>
</comment>
<dbReference type="EC" id="3.2.1.14" evidence="1"/>
<dbReference type="EC" id="2.4.-.-" evidence="1"/>
<dbReference type="EMBL" id="CP009819">
    <property type="protein sequence ID" value="ATZ57772.1"/>
    <property type="molecule type" value="Genomic_DNA"/>
</dbReference>
<dbReference type="RefSeq" id="XP_001558268.1">
    <property type="nucleotide sequence ID" value="XM_001558218.2"/>
</dbReference>
<dbReference type="SMR" id="A0A384K4T0"/>
<dbReference type="EnsemblFungi" id="Bcin15g03070.1">
    <property type="protein sequence ID" value="Bcin15p03070.1"/>
    <property type="gene ID" value="Bcin15g03070"/>
</dbReference>
<dbReference type="GeneID" id="5438878"/>
<dbReference type="KEGG" id="bfu:BCIN_15g03070"/>
<dbReference type="VEuPathDB" id="FungiDB:Bcin15g03070"/>
<dbReference type="OMA" id="VRLGIWP"/>
<dbReference type="OrthoDB" id="4781at2759"/>
<dbReference type="Proteomes" id="UP000001798">
    <property type="component" value="Chromosome bcin15"/>
</dbReference>
<dbReference type="GO" id="GO:0009277">
    <property type="term" value="C:fungal-type cell wall"/>
    <property type="evidence" value="ECO:0007669"/>
    <property type="project" value="TreeGrafter"/>
</dbReference>
<dbReference type="GO" id="GO:0016020">
    <property type="term" value="C:membrane"/>
    <property type="evidence" value="ECO:0007669"/>
    <property type="project" value="UniProtKB-KW"/>
</dbReference>
<dbReference type="GO" id="GO:0016757">
    <property type="term" value="F:glycosyltransferase activity"/>
    <property type="evidence" value="ECO:0007669"/>
    <property type="project" value="TreeGrafter"/>
</dbReference>
<dbReference type="GO" id="GO:0004553">
    <property type="term" value="F:hydrolase activity, hydrolyzing O-glycosyl compounds"/>
    <property type="evidence" value="ECO:0007669"/>
    <property type="project" value="InterPro"/>
</dbReference>
<dbReference type="GO" id="GO:0005975">
    <property type="term" value="P:carbohydrate metabolic process"/>
    <property type="evidence" value="ECO:0007669"/>
    <property type="project" value="InterPro"/>
</dbReference>
<dbReference type="GO" id="GO:0031505">
    <property type="term" value="P:fungal-type cell wall organization"/>
    <property type="evidence" value="ECO:0007669"/>
    <property type="project" value="TreeGrafter"/>
</dbReference>
<dbReference type="CDD" id="cd02183">
    <property type="entry name" value="GH16_fungal_CRH1_transglycosylase"/>
    <property type="match status" value="1"/>
</dbReference>
<dbReference type="CDD" id="cd12087">
    <property type="entry name" value="TM_EGFR-like"/>
    <property type="match status" value="1"/>
</dbReference>
<dbReference type="FunFam" id="2.60.120.200:FF:000152">
    <property type="entry name" value="Cell wall glucanase"/>
    <property type="match status" value="1"/>
</dbReference>
<dbReference type="Gene3D" id="2.60.120.200">
    <property type="match status" value="1"/>
</dbReference>
<dbReference type="InterPro" id="IPR013320">
    <property type="entry name" value="ConA-like_dom_sf"/>
</dbReference>
<dbReference type="InterPro" id="IPR000757">
    <property type="entry name" value="GH16"/>
</dbReference>
<dbReference type="InterPro" id="IPR050546">
    <property type="entry name" value="Glycosyl_Hydrlase_16"/>
</dbReference>
<dbReference type="PANTHER" id="PTHR10963:SF27">
    <property type="entry name" value="GLYCOSIDASE-RELATED"/>
    <property type="match status" value="1"/>
</dbReference>
<dbReference type="PANTHER" id="PTHR10963">
    <property type="entry name" value="GLYCOSYL HYDROLASE-RELATED"/>
    <property type="match status" value="1"/>
</dbReference>
<dbReference type="Pfam" id="PF00722">
    <property type="entry name" value="Glyco_hydro_16"/>
    <property type="match status" value="1"/>
</dbReference>
<dbReference type="SUPFAM" id="SSF49899">
    <property type="entry name" value="Concanavalin A-like lectins/glucanases"/>
    <property type="match status" value="1"/>
</dbReference>
<dbReference type="PROSITE" id="PS51762">
    <property type="entry name" value="GH16_2"/>
    <property type="match status" value="1"/>
</dbReference>
<reference key="1">
    <citation type="journal article" date="2011" name="PLoS Genet.">
        <title>Genomic analysis of the necrotrophic fungal pathogens Sclerotinia sclerotiorum and Botrytis cinerea.</title>
        <authorList>
            <person name="Amselem J."/>
            <person name="Cuomo C.A."/>
            <person name="van Kan J.A.L."/>
            <person name="Viaud M."/>
            <person name="Benito E.P."/>
            <person name="Couloux A."/>
            <person name="Coutinho P.M."/>
            <person name="de Vries R.P."/>
            <person name="Dyer P.S."/>
            <person name="Fillinger S."/>
            <person name="Fournier E."/>
            <person name="Gout L."/>
            <person name="Hahn M."/>
            <person name="Kohn L."/>
            <person name="Lapalu N."/>
            <person name="Plummer K.M."/>
            <person name="Pradier J.-M."/>
            <person name="Quevillon E."/>
            <person name="Sharon A."/>
            <person name="Simon A."/>
            <person name="ten Have A."/>
            <person name="Tudzynski B."/>
            <person name="Tudzynski P."/>
            <person name="Wincker P."/>
            <person name="Andrew M."/>
            <person name="Anthouard V."/>
            <person name="Beever R.E."/>
            <person name="Beffa R."/>
            <person name="Benoit I."/>
            <person name="Bouzid O."/>
            <person name="Brault B."/>
            <person name="Chen Z."/>
            <person name="Choquer M."/>
            <person name="Collemare J."/>
            <person name="Cotton P."/>
            <person name="Danchin E.G."/>
            <person name="Da Silva C."/>
            <person name="Gautier A."/>
            <person name="Giraud C."/>
            <person name="Giraud T."/>
            <person name="Gonzalez C."/>
            <person name="Grossetete S."/>
            <person name="Gueldener U."/>
            <person name="Henrissat B."/>
            <person name="Howlett B.J."/>
            <person name="Kodira C."/>
            <person name="Kretschmer M."/>
            <person name="Lappartient A."/>
            <person name="Leroch M."/>
            <person name="Levis C."/>
            <person name="Mauceli E."/>
            <person name="Neuveglise C."/>
            <person name="Oeser B."/>
            <person name="Pearson M."/>
            <person name="Poulain J."/>
            <person name="Poussereau N."/>
            <person name="Quesneville H."/>
            <person name="Rascle C."/>
            <person name="Schumacher J."/>
            <person name="Segurens B."/>
            <person name="Sexton A."/>
            <person name="Silva E."/>
            <person name="Sirven C."/>
            <person name="Soanes D.M."/>
            <person name="Talbot N.J."/>
            <person name="Templeton M."/>
            <person name="Yandava C."/>
            <person name="Yarden O."/>
            <person name="Zeng Q."/>
            <person name="Rollins J.A."/>
            <person name="Lebrun M.-H."/>
            <person name="Dickman M."/>
        </authorList>
    </citation>
    <scope>NUCLEOTIDE SEQUENCE [LARGE SCALE GENOMIC DNA]</scope>
    <source>
        <strain>B05.10</strain>
    </source>
</reference>
<reference key="2">
    <citation type="journal article" date="2012" name="Eukaryot. Cell">
        <title>Genome update of Botrytis cinerea strains B05.10 and T4.</title>
        <authorList>
            <person name="Staats M."/>
            <person name="van Kan J.A.L."/>
        </authorList>
    </citation>
    <scope>NUCLEOTIDE SEQUENCE [LARGE SCALE GENOMIC DNA]</scope>
    <scope>GENOME REANNOTATION</scope>
    <source>
        <strain>B05.10</strain>
    </source>
</reference>
<reference key="3">
    <citation type="journal article" date="2017" name="Mol. Plant Pathol.">
        <title>A gapless genome sequence of the fungus Botrytis cinerea.</title>
        <authorList>
            <person name="van Kan J.A.L."/>
            <person name="Stassen J.H.M."/>
            <person name="Mosbach A."/>
            <person name="van der Lee T.A.J."/>
            <person name="Faino L."/>
            <person name="Farmer A.D."/>
            <person name="Papasotiriou D.G."/>
            <person name="Zhou S."/>
            <person name="Seidl M.F."/>
            <person name="Cottam E."/>
            <person name="Edel D."/>
            <person name="Hahn M."/>
            <person name="Schwartz D.C."/>
            <person name="Dietrich R.A."/>
            <person name="Widdison S."/>
            <person name="Scalliet G."/>
        </authorList>
    </citation>
    <scope>NUCLEOTIDE SEQUENCE [LARGE SCALE GENOMIC DNA]</scope>
    <scope>GENOME REANNOTATION</scope>
    <source>
        <strain>B05.10</strain>
    </source>
</reference>
<reference key="4">
    <citation type="journal article" date="2021" name="Nat. Commun.">
        <title>The Botrytis cinerea Crh1 transglycosylase is a cytoplasmic effector triggering plant cell death and defense response.</title>
        <authorList>
            <person name="Bi K."/>
            <person name="Scalschi L."/>
            <person name="Jaiswal N."/>
            <person name="Mengiste T."/>
            <person name="Fried R."/>
            <person name="Sanz A.B."/>
            <person name="Arroyo J."/>
            <person name="Zhu W."/>
            <person name="Masrati G."/>
            <person name="Sharon A."/>
        </authorList>
    </citation>
    <scope>FUNCTION</scope>
    <scope>SUBUNIT</scope>
    <scope>INTERACTION WITH CRH1 AND CRH3</scope>
</reference>